<organism>
    <name type="scientific">Hahella chejuensis (strain KCTC 2396)</name>
    <dbReference type="NCBI Taxonomy" id="349521"/>
    <lineage>
        <taxon>Bacteria</taxon>
        <taxon>Pseudomonadati</taxon>
        <taxon>Pseudomonadota</taxon>
        <taxon>Gammaproteobacteria</taxon>
        <taxon>Oceanospirillales</taxon>
        <taxon>Hahellaceae</taxon>
        <taxon>Hahella</taxon>
    </lineage>
</organism>
<feature type="chain" id="PRO_1000007495" description="Large ribosomal subunit protein uL29">
    <location>
        <begin position="1"/>
        <end position="63"/>
    </location>
</feature>
<protein>
    <recommendedName>
        <fullName evidence="1">Large ribosomal subunit protein uL29</fullName>
    </recommendedName>
    <alternativeName>
        <fullName evidence="2">50S ribosomal protein L29</fullName>
    </alternativeName>
</protein>
<gene>
    <name evidence="1" type="primary">rpmC</name>
    <name type="ordered locus">HCH_06209</name>
</gene>
<comment type="similarity">
    <text evidence="1">Belongs to the universal ribosomal protein uL29 family.</text>
</comment>
<name>RL29_HAHCH</name>
<accession>Q2S920</accession>
<reference key="1">
    <citation type="journal article" date="2005" name="Nucleic Acids Res.">
        <title>Genomic blueprint of Hahella chejuensis, a marine microbe producing an algicidal agent.</title>
        <authorList>
            <person name="Jeong H."/>
            <person name="Yim J.H."/>
            <person name="Lee C."/>
            <person name="Choi S.-H."/>
            <person name="Park Y.K."/>
            <person name="Yoon S.H."/>
            <person name="Hur C.-G."/>
            <person name="Kang H.-Y."/>
            <person name="Kim D."/>
            <person name="Lee H.H."/>
            <person name="Park K.H."/>
            <person name="Park S.-H."/>
            <person name="Park H.-S."/>
            <person name="Lee H.K."/>
            <person name="Oh T.K."/>
            <person name="Kim J.F."/>
        </authorList>
    </citation>
    <scope>NUCLEOTIDE SEQUENCE [LARGE SCALE GENOMIC DNA]</scope>
    <source>
        <strain>KCTC 2396</strain>
    </source>
</reference>
<dbReference type="EMBL" id="CP000155">
    <property type="protein sequence ID" value="ABC32854.1"/>
    <property type="molecule type" value="Genomic_DNA"/>
</dbReference>
<dbReference type="RefSeq" id="WP_011399912.1">
    <property type="nucleotide sequence ID" value="NC_007645.1"/>
</dbReference>
<dbReference type="SMR" id="Q2S920"/>
<dbReference type="STRING" id="349521.HCH_06209"/>
<dbReference type="KEGG" id="hch:HCH_06209"/>
<dbReference type="eggNOG" id="COG0255">
    <property type="taxonomic scope" value="Bacteria"/>
</dbReference>
<dbReference type="HOGENOM" id="CLU_158491_1_2_6"/>
<dbReference type="OrthoDB" id="9815192at2"/>
<dbReference type="Proteomes" id="UP000000238">
    <property type="component" value="Chromosome"/>
</dbReference>
<dbReference type="GO" id="GO:0022625">
    <property type="term" value="C:cytosolic large ribosomal subunit"/>
    <property type="evidence" value="ECO:0007669"/>
    <property type="project" value="TreeGrafter"/>
</dbReference>
<dbReference type="GO" id="GO:0003735">
    <property type="term" value="F:structural constituent of ribosome"/>
    <property type="evidence" value="ECO:0007669"/>
    <property type="project" value="InterPro"/>
</dbReference>
<dbReference type="GO" id="GO:0006412">
    <property type="term" value="P:translation"/>
    <property type="evidence" value="ECO:0007669"/>
    <property type="project" value="UniProtKB-UniRule"/>
</dbReference>
<dbReference type="CDD" id="cd00427">
    <property type="entry name" value="Ribosomal_L29_HIP"/>
    <property type="match status" value="1"/>
</dbReference>
<dbReference type="FunFam" id="1.10.287.310:FF:000001">
    <property type="entry name" value="50S ribosomal protein L29"/>
    <property type="match status" value="1"/>
</dbReference>
<dbReference type="Gene3D" id="1.10.287.310">
    <property type="match status" value="1"/>
</dbReference>
<dbReference type="HAMAP" id="MF_00374">
    <property type="entry name" value="Ribosomal_uL29"/>
    <property type="match status" value="1"/>
</dbReference>
<dbReference type="InterPro" id="IPR050063">
    <property type="entry name" value="Ribosomal_protein_uL29"/>
</dbReference>
<dbReference type="InterPro" id="IPR001854">
    <property type="entry name" value="Ribosomal_uL29"/>
</dbReference>
<dbReference type="InterPro" id="IPR036049">
    <property type="entry name" value="Ribosomal_uL29_sf"/>
</dbReference>
<dbReference type="NCBIfam" id="TIGR00012">
    <property type="entry name" value="L29"/>
    <property type="match status" value="1"/>
</dbReference>
<dbReference type="PANTHER" id="PTHR10916">
    <property type="entry name" value="60S RIBOSOMAL PROTEIN L35/50S RIBOSOMAL PROTEIN L29"/>
    <property type="match status" value="1"/>
</dbReference>
<dbReference type="PANTHER" id="PTHR10916:SF0">
    <property type="entry name" value="LARGE RIBOSOMAL SUBUNIT PROTEIN UL29C"/>
    <property type="match status" value="1"/>
</dbReference>
<dbReference type="Pfam" id="PF00831">
    <property type="entry name" value="Ribosomal_L29"/>
    <property type="match status" value="1"/>
</dbReference>
<dbReference type="SUPFAM" id="SSF46561">
    <property type="entry name" value="Ribosomal protein L29 (L29p)"/>
    <property type="match status" value="1"/>
</dbReference>
<sequence length="63" mass="7329">MKAAELRNKTQEELGDELISLLKEQFNLRMRKATGQLNQVHLLRKVRRDIARVKTVLNQKAGE</sequence>
<evidence type="ECO:0000255" key="1">
    <source>
        <dbReference type="HAMAP-Rule" id="MF_00374"/>
    </source>
</evidence>
<evidence type="ECO:0000305" key="2"/>
<proteinExistence type="inferred from homology"/>
<keyword id="KW-1185">Reference proteome</keyword>
<keyword id="KW-0687">Ribonucleoprotein</keyword>
<keyword id="KW-0689">Ribosomal protein</keyword>